<accession>Q86HB8</accession>
<accession>Q551G4</accession>
<organism>
    <name type="scientific">Dictyostelium discoideum</name>
    <name type="common">Social amoeba</name>
    <dbReference type="NCBI Taxonomy" id="44689"/>
    <lineage>
        <taxon>Eukaryota</taxon>
        <taxon>Amoebozoa</taxon>
        <taxon>Evosea</taxon>
        <taxon>Eumycetozoa</taxon>
        <taxon>Dictyostelia</taxon>
        <taxon>Dictyosteliales</taxon>
        <taxon>Dictyosteliaceae</taxon>
        <taxon>Dictyostelium</taxon>
    </lineage>
</organism>
<evidence type="ECO:0000255" key="1"/>
<evidence type="ECO:0000305" key="2"/>
<keyword id="KW-0325">Glycoprotein</keyword>
<keyword id="KW-1185">Reference proteome</keyword>
<keyword id="KW-0964">Secreted</keyword>
<keyword id="KW-0732">Signal</keyword>
<sequence>MKVLILLVSLISVCFSQIAPKPIIVGGVYRGGETCNSLQPPYTCSSDDLAGGIMMRQGACTYFRGLSNLPTTYNSSSDGSSVIQYTYSADDYFCQESPIQTQTISNGDCEAGCSNDKISYLYNLSSDSNDQVPKNAVLTIKSQSSNCATDWETTWESIEYLNTDTCIVDEVTGGSFKVSCTQGGMTIYSYAAPGCTNNPKVYGVGFYTDSCDGYQVCSL</sequence>
<gene>
    <name type="primary">cfaC</name>
    <name type="ORF">DDB_G0276475</name>
</gene>
<comment type="subcellular location">
    <subcellularLocation>
        <location evidence="2">Secreted</location>
    </subcellularLocation>
</comment>
<feature type="signal peptide" evidence="1">
    <location>
        <begin position="1"/>
        <end position="16"/>
    </location>
</feature>
<feature type="chain" id="PRO_0000388246" description="Counting factor-associated protein C">
    <location>
        <begin position="17"/>
        <end position="219"/>
    </location>
</feature>
<feature type="glycosylation site" description="N-linked (GlcNAc...) asparagine" evidence="1">
    <location>
        <position position="74"/>
    </location>
</feature>
<feature type="glycosylation site" description="N-linked (GlcNAc...) asparagine" evidence="1">
    <location>
        <position position="123"/>
    </location>
</feature>
<dbReference type="EMBL" id="AAFI02000015">
    <property type="protein sequence ID" value="EAL69191.1"/>
    <property type="molecule type" value="Genomic_DNA"/>
</dbReference>
<dbReference type="RefSeq" id="XP_643170.1">
    <property type="nucleotide sequence ID" value="XM_638078.1"/>
</dbReference>
<dbReference type="FunCoup" id="Q86HB8">
    <property type="interactions" value="877"/>
</dbReference>
<dbReference type="GlyCosmos" id="Q86HB8">
    <property type="glycosylation" value="2 sites, No reported glycans"/>
</dbReference>
<dbReference type="GlyGen" id="Q86HB8">
    <property type="glycosylation" value="2 sites"/>
</dbReference>
<dbReference type="PaxDb" id="44689-DDB0229856"/>
<dbReference type="EnsemblProtists" id="EAL69191">
    <property type="protein sequence ID" value="EAL69191"/>
    <property type="gene ID" value="DDB_G0276475"/>
</dbReference>
<dbReference type="GeneID" id="8620578"/>
<dbReference type="KEGG" id="ddi:DDB_G0276475"/>
<dbReference type="dictyBase" id="DDB_G0276475">
    <property type="gene designation" value="cfaC"/>
</dbReference>
<dbReference type="VEuPathDB" id="AmoebaDB:DDB_G0276475"/>
<dbReference type="eggNOG" id="ENOG502RIBR">
    <property type="taxonomic scope" value="Eukaryota"/>
</dbReference>
<dbReference type="HOGENOM" id="CLU_1263548_0_0_1"/>
<dbReference type="InParanoid" id="Q86HB8"/>
<dbReference type="OMA" id="WETTWES"/>
<dbReference type="PhylomeDB" id="Q86HB8"/>
<dbReference type="PRO" id="PR:Q86HB8"/>
<dbReference type="Proteomes" id="UP000002195">
    <property type="component" value="Chromosome 2"/>
</dbReference>
<dbReference type="GO" id="GO:0005576">
    <property type="term" value="C:extracellular region"/>
    <property type="evidence" value="ECO:0007669"/>
    <property type="project" value="UniProtKB-SubCell"/>
</dbReference>
<dbReference type="InterPro" id="IPR021837">
    <property type="entry name" value="CfaA/B/C"/>
</dbReference>
<dbReference type="PANTHER" id="PTHR33714">
    <property type="entry name" value="COUNTING FACTOR-ASSOCIATED PROTEIN A-RELATED"/>
    <property type="match status" value="1"/>
</dbReference>
<dbReference type="PANTHER" id="PTHR33714:SF5">
    <property type="entry name" value="COUNTING FACTOR-ASSOCIATED PROTEIN C"/>
    <property type="match status" value="1"/>
</dbReference>
<dbReference type="Pfam" id="PF11912">
    <property type="entry name" value="CfaA_B_C"/>
    <property type="match status" value="1"/>
</dbReference>
<protein>
    <recommendedName>
        <fullName>Counting factor-associated protein C</fullName>
    </recommendedName>
</protein>
<proteinExistence type="inferred from homology"/>
<name>CFAC_DICDI</name>
<reference key="1">
    <citation type="journal article" date="2002" name="Nature">
        <title>Sequence and analysis of chromosome 2 of Dictyostelium discoideum.</title>
        <authorList>
            <person name="Gloeckner G."/>
            <person name="Eichinger L."/>
            <person name="Szafranski K."/>
            <person name="Pachebat J.A."/>
            <person name="Bankier A.T."/>
            <person name="Dear P.H."/>
            <person name="Lehmann R."/>
            <person name="Baumgart C."/>
            <person name="Parra G."/>
            <person name="Abril J.F."/>
            <person name="Guigo R."/>
            <person name="Kumpf K."/>
            <person name="Tunggal B."/>
            <person name="Cox E.C."/>
            <person name="Quail M.A."/>
            <person name="Platzer M."/>
            <person name="Rosenthal A."/>
            <person name="Noegel A.A."/>
        </authorList>
    </citation>
    <scope>NUCLEOTIDE SEQUENCE [LARGE SCALE GENOMIC DNA]</scope>
    <source>
        <strain>AX4</strain>
    </source>
</reference>
<reference key="2">
    <citation type="journal article" date="2005" name="Nature">
        <title>The genome of the social amoeba Dictyostelium discoideum.</title>
        <authorList>
            <person name="Eichinger L."/>
            <person name="Pachebat J.A."/>
            <person name="Gloeckner G."/>
            <person name="Rajandream M.A."/>
            <person name="Sucgang R."/>
            <person name="Berriman M."/>
            <person name="Song J."/>
            <person name="Olsen R."/>
            <person name="Szafranski K."/>
            <person name="Xu Q."/>
            <person name="Tunggal B."/>
            <person name="Kummerfeld S."/>
            <person name="Madera M."/>
            <person name="Konfortov B.A."/>
            <person name="Rivero F."/>
            <person name="Bankier A.T."/>
            <person name="Lehmann R."/>
            <person name="Hamlin N."/>
            <person name="Davies R."/>
            <person name="Gaudet P."/>
            <person name="Fey P."/>
            <person name="Pilcher K."/>
            <person name="Chen G."/>
            <person name="Saunders D."/>
            <person name="Sodergren E.J."/>
            <person name="Davis P."/>
            <person name="Kerhornou A."/>
            <person name="Nie X."/>
            <person name="Hall N."/>
            <person name="Anjard C."/>
            <person name="Hemphill L."/>
            <person name="Bason N."/>
            <person name="Farbrother P."/>
            <person name="Desany B."/>
            <person name="Just E."/>
            <person name="Morio T."/>
            <person name="Rost R."/>
            <person name="Churcher C.M."/>
            <person name="Cooper J."/>
            <person name="Haydock S."/>
            <person name="van Driessche N."/>
            <person name="Cronin A."/>
            <person name="Goodhead I."/>
            <person name="Muzny D.M."/>
            <person name="Mourier T."/>
            <person name="Pain A."/>
            <person name="Lu M."/>
            <person name="Harper D."/>
            <person name="Lindsay R."/>
            <person name="Hauser H."/>
            <person name="James K.D."/>
            <person name="Quiles M."/>
            <person name="Madan Babu M."/>
            <person name="Saito T."/>
            <person name="Buchrieser C."/>
            <person name="Wardroper A."/>
            <person name="Felder M."/>
            <person name="Thangavelu M."/>
            <person name="Johnson D."/>
            <person name="Knights A."/>
            <person name="Loulseged H."/>
            <person name="Mungall K.L."/>
            <person name="Oliver K."/>
            <person name="Price C."/>
            <person name="Quail M.A."/>
            <person name="Urushihara H."/>
            <person name="Hernandez J."/>
            <person name="Rabbinowitsch E."/>
            <person name="Steffen D."/>
            <person name="Sanders M."/>
            <person name="Ma J."/>
            <person name="Kohara Y."/>
            <person name="Sharp S."/>
            <person name="Simmonds M.N."/>
            <person name="Spiegler S."/>
            <person name="Tivey A."/>
            <person name="Sugano S."/>
            <person name="White B."/>
            <person name="Walker D."/>
            <person name="Woodward J.R."/>
            <person name="Winckler T."/>
            <person name="Tanaka Y."/>
            <person name="Shaulsky G."/>
            <person name="Schleicher M."/>
            <person name="Weinstock G.M."/>
            <person name="Rosenthal A."/>
            <person name="Cox E.C."/>
            <person name="Chisholm R.L."/>
            <person name="Gibbs R.A."/>
            <person name="Loomis W.F."/>
            <person name="Platzer M."/>
            <person name="Kay R.R."/>
            <person name="Williams J.G."/>
            <person name="Dear P.H."/>
            <person name="Noegel A.A."/>
            <person name="Barrell B.G."/>
            <person name="Kuspa A."/>
        </authorList>
    </citation>
    <scope>NUCLEOTIDE SEQUENCE [LARGE SCALE GENOMIC DNA]</scope>
    <source>
        <strain>AX4</strain>
    </source>
</reference>